<organism>
    <name type="scientific">Oryza sativa subsp. japonica</name>
    <name type="common">Rice</name>
    <dbReference type="NCBI Taxonomy" id="39947"/>
    <lineage>
        <taxon>Eukaryota</taxon>
        <taxon>Viridiplantae</taxon>
        <taxon>Streptophyta</taxon>
        <taxon>Embryophyta</taxon>
        <taxon>Tracheophyta</taxon>
        <taxon>Spermatophyta</taxon>
        <taxon>Magnoliopsida</taxon>
        <taxon>Liliopsida</taxon>
        <taxon>Poales</taxon>
        <taxon>Poaceae</taxon>
        <taxon>BOP clade</taxon>
        <taxon>Oryzoideae</taxon>
        <taxon>Oryzeae</taxon>
        <taxon>Oryzinae</taxon>
        <taxon>Oryza</taxon>
        <taxon>Oryza sativa</taxon>
    </lineage>
</organism>
<evidence type="ECO:0000250" key="1"/>
<evidence type="ECO:0000255" key="2">
    <source>
        <dbReference type="PROSITE-ProRule" id="PRU01082"/>
    </source>
</evidence>
<evidence type="ECO:0000256" key="3">
    <source>
        <dbReference type="SAM" id="MobiDB-lite"/>
    </source>
</evidence>
<evidence type="ECO:0000305" key="4"/>
<dbReference type="EC" id="3.1.3.16"/>
<dbReference type="EMBL" id="AC105770">
    <property type="protein sequence ID" value="AAU44010.1"/>
    <property type="molecule type" value="Genomic_DNA"/>
</dbReference>
<dbReference type="EMBL" id="AP008211">
    <property type="protein sequence ID" value="BAF17651.1"/>
    <property type="status" value="ALT_SEQ"/>
    <property type="molecule type" value="Genomic_DNA"/>
</dbReference>
<dbReference type="EMBL" id="AP014961">
    <property type="status" value="NOT_ANNOTATED_CDS"/>
    <property type="molecule type" value="Genomic_DNA"/>
</dbReference>
<dbReference type="RefSeq" id="XP_015638196.1">
    <property type="nucleotide sequence ID" value="XM_015782710.1"/>
</dbReference>
<dbReference type="SMR" id="Q65XG6"/>
<dbReference type="FunCoup" id="Q65XG6">
    <property type="interactions" value="218"/>
</dbReference>
<dbReference type="STRING" id="39947.Q65XG6"/>
<dbReference type="PaxDb" id="39947-Q65XG6"/>
<dbReference type="eggNOG" id="KOG0698">
    <property type="taxonomic scope" value="Eukaryota"/>
</dbReference>
<dbReference type="InParanoid" id="Q65XG6"/>
<dbReference type="OrthoDB" id="10264738at2759"/>
<dbReference type="Proteomes" id="UP000000763">
    <property type="component" value="Chromosome 5"/>
</dbReference>
<dbReference type="Proteomes" id="UP000059680">
    <property type="component" value="Chromosome 5"/>
</dbReference>
<dbReference type="GO" id="GO:0005634">
    <property type="term" value="C:nucleus"/>
    <property type="evidence" value="ECO:0000318"/>
    <property type="project" value="GO_Central"/>
</dbReference>
<dbReference type="GO" id="GO:0046872">
    <property type="term" value="F:metal ion binding"/>
    <property type="evidence" value="ECO:0007669"/>
    <property type="project" value="UniProtKB-KW"/>
</dbReference>
<dbReference type="GO" id="GO:0004722">
    <property type="term" value="F:protein serine/threonine phosphatase activity"/>
    <property type="evidence" value="ECO:0000318"/>
    <property type="project" value="GO_Central"/>
</dbReference>
<dbReference type="GO" id="GO:1902531">
    <property type="term" value="P:regulation of intracellular signal transduction"/>
    <property type="evidence" value="ECO:0000318"/>
    <property type="project" value="GO_Central"/>
</dbReference>
<dbReference type="CDD" id="cd00143">
    <property type="entry name" value="PP2Cc"/>
    <property type="match status" value="1"/>
</dbReference>
<dbReference type="FunFam" id="3.60.40.10:FF:000046">
    <property type="entry name" value="Probable protein phosphatase 2C 9"/>
    <property type="match status" value="1"/>
</dbReference>
<dbReference type="Gene3D" id="3.60.40.10">
    <property type="entry name" value="PPM-type phosphatase domain"/>
    <property type="match status" value="1"/>
</dbReference>
<dbReference type="InterPro" id="IPR015655">
    <property type="entry name" value="PP2C"/>
</dbReference>
<dbReference type="InterPro" id="IPR000222">
    <property type="entry name" value="PP2C_BS"/>
</dbReference>
<dbReference type="InterPro" id="IPR036457">
    <property type="entry name" value="PPM-type-like_dom_sf"/>
</dbReference>
<dbReference type="InterPro" id="IPR001932">
    <property type="entry name" value="PPM-type_phosphatase-like_dom"/>
</dbReference>
<dbReference type="PANTHER" id="PTHR47992">
    <property type="entry name" value="PROTEIN PHOSPHATASE"/>
    <property type="match status" value="1"/>
</dbReference>
<dbReference type="Pfam" id="PF00481">
    <property type="entry name" value="PP2C"/>
    <property type="match status" value="1"/>
</dbReference>
<dbReference type="SMART" id="SM00332">
    <property type="entry name" value="PP2Cc"/>
    <property type="match status" value="1"/>
</dbReference>
<dbReference type="SUPFAM" id="SSF81606">
    <property type="entry name" value="PP2C-like"/>
    <property type="match status" value="1"/>
</dbReference>
<dbReference type="PROSITE" id="PS01032">
    <property type="entry name" value="PPM_1"/>
    <property type="match status" value="1"/>
</dbReference>
<dbReference type="PROSITE" id="PS51746">
    <property type="entry name" value="PPM_2"/>
    <property type="match status" value="1"/>
</dbReference>
<feature type="chain" id="PRO_0000363296" description="Probable protein phosphatase 2C 49">
    <location>
        <begin position="1"/>
        <end position="416"/>
    </location>
</feature>
<feature type="domain" description="PPM-type phosphatase" evidence="2">
    <location>
        <begin position="91"/>
        <end position="411"/>
    </location>
</feature>
<feature type="region of interest" description="Disordered" evidence="3">
    <location>
        <begin position="343"/>
        <end position="368"/>
    </location>
</feature>
<feature type="compositionally biased region" description="Pro residues" evidence="3">
    <location>
        <begin position="343"/>
        <end position="360"/>
    </location>
</feature>
<feature type="binding site" evidence="1">
    <location>
        <position position="131"/>
    </location>
    <ligand>
        <name>Mn(2+)</name>
        <dbReference type="ChEBI" id="CHEBI:29035"/>
        <label>1</label>
    </ligand>
</feature>
<feature type="binding site" evidence="1">
    <location>
        <position position="131"/>
    </location>
    <ligand>
        <name>Mn(2+)</name>
        <dbReference type="ChEBI" id="CHEBI:29035"/>
        <label>2</label>
    </ligand>
</feature>
<feature type="binding site" evidence="1">
    <location>
        <position position="132"/>
    </location>
    <ligand>
        <name>Mn(2+)</name>
        <dbReference type="ChEBI" id="CHEBI:29035"/>
        <label>1</label>
    </ligand>
</feature>
<feature type="binding site" evidence="1">
    <location>
        <position position="319"/>
    </location>
    <ligand>
        <name>Mn(2+)</name>
        <dbReference type="ChEBI" id="CHEBI:29035"/>
        <label>2</label>
    </ligand>
</feature>
<feature type="binding site" evidence="1">
    <location>
        <position position="402"/>
    </location>
    <ligand>
        <name>Mn(2+)</name>
        <dbReference type="ChEBI" id="CHEBI:29035"/>
        <label>2</label>
    </ligand>
</feature>
<keyword id="KW-0378">Hydrolase</keyword>
<keyword id="KW-0460">Magnesium</keyword>
<keyword id="KW-0464">Manganese</keyword>
<keyword id="KW-0479">Metal-binding</keyword>
<keyword id="KW-0904">Protein phosphatase</keyword>
<keyword id="KW-1185">Reference proteome</keyword>
<sequence>MAAEICREEAAKSMPAAAAGATAIARRRRRVEGFRFAAGSLEPPQEDADAGVARCGKRQRVAGARAGAGAATAGPCRPSAGAEFGSRWWPRYGVTSVFGRRREMEDAVSIRPDFLRGSTSSGKHHFFGVFDGHGCSHVARMCQDRMHELVVDAYKKAVSGKEAAAAAPAWKDVMEKGFARMDDEATIWAKSRTGGEPACRCELQTPARCDHVGSTAVVAVVGPNRVVVANSGDSRAVLCRAGVPVPLSVDHKPDRPDELERIKAAGGRVIYWDGARVLGVLAMSRAIGDGYLKPYVTSEPEVTVTERADDDECLILASDGLWDVVTNEMACEVVRACFRSNGPPSPPGCSRPKAVLPPPAGASGGGGGDAVVKGVDKAESDKACADAALLLAKLAIARRSADNVSVVVVDLRRPVP</sequence>
<name>P2C49_ORYSJ</name>
<protein>
    <recommendedName>
        <fullName>Probable protein phosphatase 2C 49</fullName>
        <shortName>OsPP2C49</shortName>
        <ecNumber>3.1.3.16</ecNumber>
    </recommendedName>
</protein>
<proteinExistence type="inferred from homology"/>
<gene>
    <name type="ordered locus">Os05g0457200</name>
    <name type="ordered locus">LOC_Os05g38290</name>
    <name type="ORF">OJ1362_D02.1</name>
</gene>
<comment type="catalytic activity">
    <reaction>
        <text>O-phospho-L-seryl-[protein] + H2O = L-seryl-[protein] + phosphate</text>
        <dbReference type="Rhea" id="RHEA:20629"/>
        <dbReference type="Rhea" id="RHEA-COMP:9863"/>
        <dbReference type="Rhea" id="RHEA-COMP:11604"/>
        <dbReference type="ChEBI" id="CHEBI:15377"/>
        <dbReference type="ChEBI" id="CHEBI:29999"/>
        <dbReference type="ChEBI" id="CHEBI:43474"/>
        <dbReference type="ChEBI" id="CHEBI:83421"/>
        <dbReference type="EC" id="3.1.3.16"/>
    </reaction>
</comment>
<comment type="catalytic activity">
    <reaction>
        <text>O-phospho-L-threonyl-[protein] + H2O = L-threonyl-[protein] + phosphate</text>
        <dbReference type="Rhea" id="RHEA:47004"/>
        <dbReference type="Rhea" id="RHEA-COMP:11060"/>
        <dbReference type="Rhea" id="RHEA-COMP:11605"/>
        <dbReference type="ChEBI" id="CHEBI:15377"/>
        <dbReference type="ChEBI" id="CHEBI:30013"/>
        <dbReference type="ChEBI" id="CHEBI:43474"/>
        <dbReference type="ChEBI" id="CHEBI:61977"/>
        <dbReference type="EC" id="3.1.3.16"/>
    </reaction>
</comment>
<comment type="cofactor">
    <cofactor evidence="1">
        <name>Mg(2+)</name>
        <dbReference type="ChEBI" id="CHEBI:18420"/>
    </cofactor>
    <cofactor evidence="1">
        <name>Mn(2+)</name>
        <dbReference type="ChEBI" id="CHEBI:29035"/>
    </cofactor>
    <text evidence="1">Binds 2 magnesium or manganese ions per subunit.</text>
</comment>
<comment type="similarity">
    <text evidence="4">Belongs to the PP2C family.</text>
</comment>
<comment type="sequence caution" evidence="4">
    <conflict type="erroneous gene model prediction">
        <sequence resource="EMBL-CDS" id="BAF17651"/>
    </conflict>
</comment>
<reference key="1">
    <citation type="journal article" date="2005" name="Mol. Genet. Genomics">
        <title>A fine physical map of the rice chromosome 5.</title>
        <authorList>
            <person name="Cheng C.-H."/>
            <person name="Chung M.C."/>
            <person name="Liu S.-M."/>
            <person name="Chen S.-K."/>
            <person name="Kao F.Y."/>
            <person name="Lin S.-J."/>
            <person name="Hsiao S.-H."/>
            <person name="Tseng I.C."/>
            <person name="Hsing Y.-I.C."/>
            <person name="Wu H.-P."/>
            <person name="Chen C.-S."/>
            <person name="Shaw J.-F."/>
            <person name="Wu J."/>
            <person name="Matsumoto T."/>
            <person name="Sasaki T."/>
            <person name="Chen H.-C."/>
            <person name="Chow T.-Y."/>
        </authorList>
    </citation>
    <scope>NUCLEOTIDE SEQUENCE [LARGE SCALE GENOMIC DNA]</scope>
    <source>
        <strain>cv. Nipponbare</strain>
    </source>
</reference>
<reference key="2">
    <citation type="journal article" date="2005" name="Nature">
        <title>The map-based sequence of the rice genome.</title>
        <authorList>
            <consortium name="International rice genome sequencing project (IRGSP)"/>
        </authorList>
    </citation>
    <scope>NUCLEOTIDE SEQUENCE [LARGE SCALE GENOMIC DNA]</scope>
    <source>
        <strain>cv. Nipponbare</strain>
    </source>
</reference>
<reference key="3">
    <citation type="journal article" date="2008" name="Nucleic Acids Res.">
        <title>The rice annotation project database (RAP-DB): 2008 update.</title>
        <authorList>
            <consortium name="The rice annotation project (RAP)"/>
        </authorList>
    </citation>
    <scope>GENOME REANNOTATION</scope>
    <source>
        <strain>cv. Nipponbare</strain>
    </source>
</reference>
<reference key="4">
    <citation type="journal article" date="2013" name="Rice">
        <title>Improvement of the Oryza sativa Nipponbare reference genome using next generation sequence and optical map data.</title>
        <authorList>
            <person name="Kawahara Y."/>
            <person name="de la Bastide M."/>
            <person name="Hamilton J.P."/>
            <person name="Kanamori H."/>
            <person name="McCombie W.R."/>
            <person name="Ouyang S."/>
            <person name="Schwartz D.C."/>
            <person name="Tanaka T."/>
            <person name="Wu J."/>
            <person name="Zhou S."/>
            <person name="Childs K.L."/>
            <person name="Davidson R.M."/>
            <person name="Lin H."/>
            <person name="Quesada-Ocampo L."/>
            <person name="Vaillancourt B."/>
            <person name="Sakai H."/>
            <person name="Lee S.S."/>
            <person name="Kim J."/>
            <person name="Numa H."/>
            <person name="Itoh T."/>
            <person name="Buell C.R."/>
            <person name="Matsumoto T."/>
        </authorList>
    </citation>
    <scope>GENOME REANNOTATION</scope>
    <source>
        <strain>cv. Nipponbare</strain>
    </source>
</reference>
<reference key="5">
    <citation type="journal article" date="2008" name="BMC Genomics">
        <title>Genome-wide and expression analysis of protein phosphatase 2C in rice and Arabidopsis.</title>
        <authorList>
            <person name="Xue T."/>
            <person name="Wang D."/>
            <person name="Zhang S."/>
            <person name="Ehlting J."/>
            <person name="Ni F."/>
            <person name="Jacab S."/>
            <person name="Zheng C."/>
            <person name="Zhong Y."/>
        </authorList>
    </citation>
    <scope>GENE FAMILY</scope>
    <scope>NOMENCLATURE</scope>
</reference>
<accession>Q65XG6</accession>
<accession>Q0DHM2</accession>